<feature type="chain" id="PRO_0000210747" description="CRAL-TRIO domain-containing protein YKL091C">
    <location>
        <begin position="1"/>
        <end position="310"/>
    </location>
</feature>
<feature type="domain" description="CRAL-TRIO" evidence="1">
    <location>
        <begin position="101"/>
        <end position="274"/>
    </location>
</feature>
<feature type="helix" evidence="4">
    <location>
        <begin position="5"/>
        <end position="8"/>
    </location>
</feature>
<feature type="helix" evidence="4">
    <location>
        <begin position="27"/>
        <end position="42"/>
    </location>
</feature>
<feature type="helix" evidence="4">
    <location>
        <begin position="51"/>
        <end position="60"/>
    </location>
</feature>
<feature type="turn" evidence="4">
    <location>
        <begin position="61"/>
        <end position="63"/>
    </location>
</feature>
<feature type="helix" evidence="4">
    <location>
        <begin position="65"/>
        <end position="81"/>
    </location>
</feature>
<feature type="helix" evidence="4">
    <location>
        <begin position="84"/>
        <end position="86"/>
    </location>
</feature>
<feature type="helix" evidence="4">
    <location>
        <begin position="87"/>
        <end position="93"/>
    </location>
</feature>
<feature type="helix" evidence="4">
    <location>
        <begin position="95"/>
        <end position="106"/>
    </location>
</feature>
<feature type="strand" evidence="4">
    <location>
        <begin position="111"/>
        <end position="116"/>
    </location>
</feature>
<feature type="strand" evidence="4">
    <location>
        <begin position="122"/>
        <end position="127"/>
    </location>
</feature>
<feature type="helix" evidence="4">
    <location>
        <begin position="133"/>
        <end position="139"/>
    </location>
</feature>
<feature type="helix" evidence="4">
    <location>
        <begin position="142"/>
        <end position="158"/>
    </location>
</feature>
<feature type="helix" evidence="4">
    <location>
        <begin position="160"/>
        <end position="168"/>
    </location>
</feature>
<feature type="strand" evidence="4">
    <location>
        <begin position="175"/>
        <end position="180"/>
    </location>
</feature>
<feature type="helix" evidence="4">
    <location>
        <begin position="186"/>
        <end position="191"/>
    </location>
</feature>
<feature type="helix" evidence="4">
    <location>
        <begin position="193"/>
        <end position="206"/>
    </location>
</feature>
<feature type="strand" evidence="4">
    <location>
        <begin position="211"/>
        <end position="218"/>
    </location>
</feature>
<feature type="helix" evidence="4">
    <location>
        <begin position="223"/>
        <end position="226"/>
    </location>
</feature>
<feature type="helix" evidence="4">
    <location>
        <begin position="227"/>
        <end position="229"/>
    </location>
</feature>
<feature type="helix" evidence="4">
    <location>
        <begin position="231"/>
        <end position="233"/>
    </location>
</feature>
<feature type="helix" evidence="4">
    <location>
        <begin position="236"/>
        <end position="239"/>
    </location>
</feature>
<feature type="strand" evidence="4">
    <location>
        <begin position="242"/>
        <end position="244"/>
    </location>
</feature>
<feature type="helix" evidence="4">
    <location>
        <begin position="249"/>
        <end position="256"/>
    </location>
</feature>
<feature type="helix" evidence="4">
    <location>
        <begin position="259"/>
        <end position="261"/>
    </location>
</feature>
<feature type="helix" evidence="4">
    <location>
        <begin position="264"/>
        <end position="266"/>
    </location>
</feature>
<feature type="helix" evidence="4">
    <location>
        <begin position="279"/>
        <end position="281"/>
    </location>
</feature>
<feature type="strand" evidence="3">
    <location>
        <begin position="282"/>
        <end position="285"/>
    </location>
</feature>
<feature type="helix" evidence="4">
    <location>
        <begin position="286"/>
        <end position="288"/>
    </location>
</feature>
<feature type="turn" evidence="4">
    <location>
        <begin position="290"/>
        <end position="292"/>
    </location>
</feature>
<feature type="helix" evidence="4">
    <location>
        <begin position="304"/>
        <end position="306"/>
    </location>
</feature>
<dbReference type="EMBL" id="Z28091">
    <property type="protein sequence ID" value="CAA81929.1"/>
    <property type="molecule type" value="Genomic_DNA"/>
</dbReference>
<dbReference type="EMBL" id="X74130">
    <property type="protein sequence ID" value="CAA52227.1"/>
    <property type="molecule type" value="Genomic_DNA"/>
</dbReference>
<dbReference type="EMBL" id="BK006944">
    <property type="protein sequence ID" value="DAA09067.1"/>
    <property type="molecule type" value="Genomic_DNA"/>
</dbReference>
<dbReference type="PIR" id="S37916">
    <property type="entry name" value="S37916"/>
</dbReference>
<dbReference type="PDB" id="3B74">
    <property type="method" value="X-ray"/>
    <property type="resolution" value="1.90 A"/>
    <property type="chains" value="A=1-310"/>
</dbReference>
<dbReference type="PDB" id="3B7N">
    <property type="method" value="X-ray"/>
    <property type="resolution" value="1.86 A"/>
    <property type="chains" value="A=1-310"/>
</dbReference>
<dbReference type="PDB" id="3B7Q">
    <property type="method" value="X-ray"/>
    <property type="resolution" value="2.03 A"/>
    <property type="chains" value="A/B=1-310"/>
</dbReference>
<dbReference type="PDB" id="3B7Z">
    <property type="method" value="X-ray"/>
    <property type="resolution" value="2.03 A"/>
    <property type="chains" value="A=1-310"/>
</dbReference>
<dbReference type="PDB" id="3Q8G">
    <property type="method" value="X-ray"/>
    <property type="resolution" value="1.80 A"/>
    <property type="chains" value="A=1-310"/>
</dbReference>
<dbReference type="PDB" id="6SLD">
    <property type="method" value="X-ray"/>
    <property type="resolution" value="1.40 A"/>
    <property type="chains" value="A=4-310"/>
</dbReference>
<dbReference type="PDBsum" id="3B74"/>
<dbReference type="PDBsum" id="3B7N"/>
<dbReference type="PDBsum" id="3B7Q"/>
<dbReference type="PDBsum" id="3B7Z"/>
<dbReference type="PDBsum" id="3Q8G"/>
<dbReference type="PDBsum" id="6SLD"/>
<dbReference type="SMR" id="P33324"/>
<dbReference type="BioGRID" id="34042">
    <property type="interactions" value="49"/>
</dbReference>
<dbReference type="FunCoup" id="P33324">
    <property type="interactions" value="555"/>
</dbReference>
<dbReference type="IntAct" id="P33324">
    <property type="interactions" value="3"/>
</dbReference>
<dbReference type="MINT" id="P33324"/>
<dbReference type="STRING" id="4932.YKL091C"/>
<dbReference type="GlyGen" id="P33324">
    <property type="glycosylation" value="1 site"/>
</dbReference>
<dbReference type="iPTMnet" id="P33324"/>
<dbReference type="PaxDb" id="4932-YKL091C"/>
<dbReference type="PeptideAtlas" id="P33324"/>
<dbReference type="EnsemblFungi" id="YKL091C_mRNA">
    <property type="protein sequence ID" value="YKL091C"/>
    <property type="gene ID" value="YKL091C"/>
</dbReference>
<dbReference type="GeneID" id="853771"/>
<dbReference type="KEGG" id="sce:YKL091C"/>
<dbReference type="AGR" id="SGD:S000001574"/>
<dbReference type="SGD" id="S000001574">
    <property type="gene designation" value="YKL091C"/>
</dbReference>
<dbReference type="VEuPathDB" id="FungiDB:YKL091C"/>
<dbReference type="eggNOG" id="KOG1471">
    <property type="taxonomic scope" value="Eukaryota"/>
</dbReference>
<dbReference type="GeneTree" id="ENSGT00530000066638"/>
<dbReference type="HOGENOM" id="CLU_014001_0_1_1"/>
<dbReference type="InParanoid" id="P33324"/>
<dbReference type="OMA" id="FSTMFKM"/>
<dbReference type="OrthoDB" id="1434354at2759"/>
<dbReference type="BioCyc" id="YEAST:G3O-31882-MONOMER"/>
<dbReference type="BioGRID-ORCS" id="853771">
    <property type="hits" value="0 hits in 10 CRISPR screens"/>
</dbReference>
<dbReference type="EvolutionaryTrace" id="P33324"/>
<dbReference type="PRO" id="PR:P33324"/>
<dbReference type="Proteomes" id="UP000002311">
    <property type="component" value="Chromosome XI"/>
</dbReference>
<dbReference type="RNAct" id="P33324">
    <property type="molecule type" value="protein"/>
</dbReference>
<dbReference type="GO" id="GO:0005634">
    <property type="term" value="C:nucleus"/>
    <property type="evidence" value="ECO:0000314"/>
    <property type="project" value="SGD"/>
</dbReference>
<dbReference type="GO" id="GO:0031210">
    <property type="term" value="F:phosphatidylcholine binding"/>
    <property type="evidence" value="ECO:0000314"/>
    <property type="project" value="SGD"/>
</dbReference>
<dbReference type="GO" id="GO:0035091">
    <property type="term" value="F:phosphatidylinositol binding"/>
    <property type="evidence" value="ECO:0000314"/>
    <property type="project" value="SGD"/>
</dbReference>
<dbReference type="GO" id="GO:0008526">
    <property type="term" value="F:phosphatidylinositol transfer activity"/>
    <property type="evidence" value="ECO:0000318"/>
    <property type="project" value="GO_Central"/>
</dbReference>
<dbReference type="GO" id="GO:0006892">
    <property type="term" value="P:post-Golgi vesicle-mediated transport"/>
    <property type="evidence" value="ECO:0000318"/>
    <property type="project" value="GO_Central"/>
</dbReference>
<dbReference type="CDD" id="cd00170">
    <property type="entry name" value="SEC14"/>
    <property type="match status" value="1"/>
</dbReference>
<dbReference type="FunFam" id="1.10.8.20:FF:000005">
    <property type="entry name" value="SEC14 cytosolic factor"/>
    <property type="match status" value="1"/>
</dbReference>
<dbReference type="FunFam" id="3.40.525.10:FF:000011">
    <property type="entry name" value="SEC14 cytosolic factor"/>
    <property type="match status" value="1"/>
</dbReference>
<dbReference type="Gene3D" id="3.40.525.10">
    <property type="entry name" value="CRAL-TRIO lipid binding domain"/>
    <property type="match status" value="1"/>
</dbReference>
<dbReference type="Gene3D" id="1.10.8.20">
    <property type="entry name" value="N-terminal domain of phosphatidylinositol transfer protein sec14p"/>
    <property type="match status" value="1"/>
</dbReference>
<dbReference type="InterPro" id="IPR001251">
    <property type="entry name" value="CRAL-TRIO_dom"/>
</dbReference>
<dbReference type="InterPro" id="IPR036865">
    <property type="entry name" value="CRAL-TRIO_dom_sf"/>
</dbReference>
<dbReference type="InterPro" id="IPR011074">
    <property type="entry name" value="CRAL/TRIO_N_dom"/>
</dbReference>
<dbReference type="InterPro" id="IPR036273">
    <property type="entry name" value="CRAL/TRIO_N_dom_sf"/>
</dbReference>
<dbReference type="InterPro" id="IPR051026">
    <property type="entry name" value="PI/PC_transfer"/>
</dbReference>
<dbReference type="PANTHER" id="PTHR45657">
    <property type="entry name" value="CRAL-TRIO DOMAIN-CONTAINING PROTEIN YKL091C-RELATED"/>
    <property type="match status" value="1"/>
</dbReference>
<dbReference type="PANTHER" id="PTHR45657:SF1">
    <property type="entry name" value="CRAL-TRIO DOMAIN-CONTAINING PROTEIN YKL091C-RELATED"/>
    <property type="match status" value="1"/>
</dbReference>
<dbReference type="Pfam" id="PF00650">
    <property type="entry name" value="CRAL_TRIO"/>
    <property type="match status" value="1"/>
</dbReference>
<dbReference type="Pfam" id="PF03765">
    <property type="entry name" value="CRAL_TRIO_N"/>
    <property type="match status" value="1"/>
</dbReference>
<dbReference type="SMART" id="SM01100">
    <property type="entry name" value="CRAL_TRIO_N"/>
    <property type="match status" value="1"/>
</dbReference>
<dbReference type="SMART" id="SM00516">
    <property type="entry name" value="SEC14"/>
    <property type="match status" value="1"/>
</dbReference>
<dbReference type="SUPFAM" id="SSF52087">
    <property type="entry name" value="CRAL/TRIO domain"/>
    <property type="match status" value="1"/>
</dbReference>
<dbReference type="SUPFAM" id="SSF46938">
    <property type="entry name" value="CRAL/TRIO N-terminal domain"/>
    <property type="match status" value="1"/>
</dbReference>
<dbReference type="PROSITE" id="PS50191">
    <property type="entry name" value="CRAL_TRIO"/>
    <property type="match status" value="1"/>
</dbReference>
<evidence type="ECO:0000255" key="1">
    <source>
        <dbReference type="PROSITE-ProRule" id="PRU00056"/>
    </source>
</evidence>
<evidence type="ECO:0000269" key="2">
    <source>
    </source>
</evidence>
<evidence type="ECO:0007829" key="3">
    <source>
        <dbReference type="PDB" id="3B74"/>
    </source>
</evidence>
<evidence type="ECO:0007829" key="4">
    <source>
        <dbReference type="PDB" id="6SLD"/>
    </source>
</evidence>
<name>YKJ1_YEAST</name>
<reference key="1">
    <citation type="journal article" date="1994" name="Nature">
        <title>Complete DNA sequence of yeast chromosome XI.</title>
        <authorList>
            <person name="Dujon B."/>
            <person name="Alexandraki D."/>
            <person name="Andre B."/>
            <person name="Ansorge W."/>
            <person name="Baladron V."/>
            <person name="Ballesta J.P.G."/>
            <person name="Banrevi A."/>
            <person name="Bolle P.-A."/>
            <person name="Bolotin-Fukuhara M."/>
            <person name="Bossier P."/>
            <person name="Bou G."/>
            <person name="Boyer J."/>
            <person name="Buitrago M.J."/>
            <person name="Cheret G."/>
            <person name="Colleaux L."/>
            <person name="Daignan-Fornier B."/>
            <person name="del Rey F."/>
            <person name="Dion C."/>
            <person name="Domdey H."/>
            <person name="Duesterhoeft A."/>
            <person name="Duesterhus S."/>
            <person name="Entian K.-D."/>
            <person name="Erfle H."/>
            <person name="Esteban P.F."/>
            <person name="Feldmann H."/>
            <person name="Fernandes L."/>
            <person name="Fobo G.M."/>
            <person name="Fritz C."/>
            <person name="Fukuhara H."/>
            <person name="Gabel C."/>
            <person name="Gaillon L."/>
            <person name="Garcia-Cantalejo J.M."/>
            <person name="Garcia-Ramirez J.J."/>
            <person name="Gent M.E."/>
            <person name="Ghazvini M."/>
            <person name="Goffeau A."/>
            <person name="Gonzalez A."/>
            <person name="Grothues D."/>
            <person name="Guerreiro P."/>
            <person name="Hegemann J.H."/>
            <person name="Hewitt N."/>
            <person name="Hilger F."/>
            <person name="Hollenberg C.P."/>
            <person name="Horaitis O."/>
            <person name="Indge K.J."/>
            <person name="Jacquier A."/>
            <person name="James C.M."/>
            <person name="Jauniaux J.-C."/>
            <person name="Jimenez A."/>
            <person name="Keuchel H."/>
            <person name="Kirchrath L."/>
            <person name="Kleine K."/>
            <person name="Koetter P."/>
            <person name="Legrain P."/>
            <person name="Liebl S."/>
            <person name="Louis E.J."/>
            <person name="Maia e Silva A."/>
            <person name="Marck C."/>
            <person name="Monnier A.-L."/>
            <person name="Moestl D."/>
            <person name="Mueller S."/>
            <person name="Obermaier B."/>
            <person name="Oliver S.G."/>
            <person name="Pallier C."/>
            <person name="Pascolo S."/>
            <person name="Pfeiffer F."/>
            <person name="Philippsen P."/>
            <person name="Planta R.J."/>
            <person name="Pohl F.M."/>
            <person name="Pohl T.M."/>
            <person name="Poehlmann R."/>
            <person name="Portetelle D."/>
            <person name="Purnelle B."/>
            <person name="Puzos V."/>
            <person name="Ramezani Rad M."/>
            <person name="Rasmussen S.W."/>
            <person name="Remacha M.A."/>
            <person name="Revuelta J.L."/>
            <person name="Richard G.-F."/>
            <person name="Rieger M."/>
            <person name="Rodrigues-Pousada C."/>
            <person name="Rose M."/>
            <person name="Rupp T."/>
            <person name="Santos M.A."/>
            <person name="Schwager C."/>
            <person name="Sensen C."/>
            <person name="Skala J."/>
            <person name="Soares H."/>
            <person name="Sor F."/>
            <person name="Stegemann J."/>
            <person name="Tettelin H."/>
            <person name="Thierry A."/>
            <person name="Tzermia M."/>
            <person name="Urrestarazu L.A."/>
            <person name="van Dyck L."/>
            <person name="van Vliet-Reedijk J.C."/>
            <person name="Valens M."/>
            <person name="Vandenbol M."/>
            <person name="Vilela C."/>
            <person name="Vissers S."/>
            <person name="von Wettstein D."/>
            <person name="Voss H."/>
            <person name="Wiemann S."/>
            <person name="Xu G."/>
            <person name="Zimmermann J."/>
            <person name="Haasemann M."/>
            <person name="Becker I."/>
            <person name="Mewes H.-W."/>
        </authorList>
    </citation>
    <scope>NUCLEOTIDE SEQUENCE [LARGE SCALE GENOMIC DNA]</scope>
    <source>
        <strain>ATCC 204508 / S288c</strain>
    </source>
</reference>
<reference key="2">
    <citation type="journal article" date="2014" name="G3 (Bethesda)">
        <title>The reference genome sequence of Saccharomyces cerevisiae: Then and now.</title>
        <authorList>
            <person name="Engel S.R."/>
            <person name="Dietrich F.S."/>
            <person name="Fisk D.G."/>
            <person name="Binkley G."/>
            <person name="Balakrishnan R."/>
            <person name="Costanzo M.C."/>
            <person name="Dwight S.S."/>
            <person name="Hitz B.C."/>
            <person name="Karra K."/>
            <person name="Nash R.S."/>
            <person name="Weng S."/>
            <person name="Wong E.D."/>
            <person name="Lloyd P."/>
            <person name="Skrzypek M.S."/>
            <person name="Miyasato S.R."/>
            <person name="Simison M."/>
            <person name="Cherry J.M."/>
        </authorList>
    </citation>
    <scope>GENOME REANNOTATION</scope>
    <source>
        <strain>ATCC 204508 / S288c</strain>
    </source>
</reference>
<reference key="3">
    <citation type="journal article" date="1993" name="EMBO J.">
        <title>Yeast G1 cyclins CLN1 and CLN2 and a GAP-like protein have a role in bud formation.</title>
        <authorList>
            <person name="Cvrckova F."/>
            <person name="Nasmyth K."/>
        </authorList>
    </citation>
    <scope>NUCLEOTIDE SEQUENCE [GENOMIC DNA] OF 235-310</scope>
</reference>
<reference key="4">
    <citation type="journal article" date="2003" name="Nature">
        <title>Global analysis of protein expression in yeast.</title>
        <authorList>
            <person name="Ghaemmaghami S."/>
            <person name="Huh W.-K."/>
            <person name="Bower K."/>
            <person name="Howson R.W."/>
            <person name="Belle A."/>
            <person name="Dephoure N."/>
            <person name="O'Shea E.K."/>
            <person name="Weissman J.S."/>
        </authorList>
    </citation>
    <scope>LEVEL OF PROTEIN EXPRESSION [LARGE SCALE ANALYSIS]</scope>
</reference>
<comment type="miscellaneous">
    <text evidence="2">Present with 2870 molecules/cell in log phase SD medium.</text>
</comment>
<accession>P33324</accession>
<accession>D6VXJ7</accession>
<proteinExistence type="evidence at protein level"/>
<gene>
    <name type="ordered locus">YKL091C</name>
</gene>
<keyword id="KW-0002">3D-structure</keyword>
<keyword id="KW-1185">Reference proteome</keyword>
<protein>
    <recommendedName>
        <fullName>CRAL-TRIO domain-containing protein YKL091C</fullName>
    </recommendedName>
</protein>
<sequence length="310" mass="36073">MTTSILDTYPQICSPNALPGTPGNLTKEQEEALLQFRSILLEKNYKERLDDSTLLRFLRARKFDINASVEMFVETERWREEYGANTIIEDYENNKEAEDKERIKLAKMYPQYYHHVDKDGRPLYFEELGGINLKKMYKITTEKQMLRNLVKEYELFATYRVPACSRRAGYLIETSCTVLDLKGISLSNAYHVLSYIKDVADISQNYYPERMGKFYIIHSPFGFSTMFKMVKPFLDPVTVSKIFILGSSYKKELLKQIPIENLPVKYGGTSVLHNPNDKFYYSDIGPWRDPRYIGPEGEIPNIFGKFTVTS</sequence>
<organism>
    <name type="scientific">Saccharomyces cerevisiae (strain ATCC 204508 / S288c)</name>
    <name type="common">Baker's yeast</name>
    <dbReference type="NCBI Taxonomy" id="559292"/>
    <lineage>
        <taxon>Eukaryota</taxon>
        <taxon>Fungi</taxon>
        <taxon>Dikarya</taxon>
        <taxon>Ascomycota</taxon>
        <taxon>Saccharomycotina</taxon>
        <taxon>Saccharomycetes</taxon>
        <taxon>Saccharomycetales</taxon>
        <taxon>Saccharomycetaceae</taxon>
        <taxon>Saccharomyces</taxon>
    </lineage>
</organism>